<reference key="1">
    <citation type="journal article" date="1991" name="Biochemistry">
        <title>Two distinct forms of peptidylprolyl-cis-trans-isomerase are expressed separately in periplasmic and cytoplasmic compartments of Escherichia coli cells.</title>
        <authorList>
            <person name="Hayano T."/>
            <person name="Takahashi N."/>
            <person name="Kato S."/>
            <person name="Maki N."/>
            <person name="Suzuki M."/>
        </authorList>
    </citation>
    <scope>NUCLEOTIDE SEQUENCE [GENOMIC DNA]</scope>
    <scope>FUNCTION</scope>
    <scope>CATALYTIC ACTIVITY</scope>
    <scope>SUBCELLULAR LOCATION</scope>
</reference>
<reference key="2">
    <citation type="journal article" date="1997" name="Science">
        <title>The complete genome sequence of Escherichia coli K-12.</title>
        <authorList>
            <person name="Blattner F.R."/>
            <person name="Plunkett G. III"/>
            <person name="Bloch C.A."/>
            <person name="Perna N.T."/>
            <person name="Burland V."/>
            <person name="Riley M."/>
            <person name="Collado-Vides J."/>
            <person name="Glasner J.D."/>
            <person name="Rode C.K."/>
            <person name="Mayhew G.F."/>
            <person name="Gregor J."/>
            <person name="Davis N.W."/>
            <person name="Kirkpatrick H.A."/>
            <person name="Goeden M.A."/>
            <person name="Rose D.J."/>
            <person name="Mau B."/>
            <person name="Shao Y."/>
        </authorList>
    </citation>
    <scope>NUCLEOTIDE SEQUENCE [LARGE SCALE GENOMIC DNA]</scope>
    <source>
        <strain>K12 / MG1655 / ATCC 47076</strain>
    </source>
</reference>
<reference key="3">
    <citation type="journal article" date="2006" name="Mol. Syst. Biol.">
        <title>Highly accurate genome sequences of Escherichia coli K-12 strains MG1655 and W3110.</title>
        <authorList>
            <person name="Hayashi K."/>
            <person name="Morooka N."/>
            <person name="Yamamoto Y."/>
            <person name="Fujita K."/>
            <person name="Isono K."/>
            <person name="Choi S."/>
            <person name="Ohtsubo E."/>
            <person name="Baba T."/>
            <person name="Wanner B.L."/>
            <person name="Mori H."/>
            <person name="Horiuchi T."/>
        </authorList>
    </citation>
    <scope>NUCLEOTIDE SEQUENCE [LARGE SCALE GENOMIC DNA]</scope>
    <source>
        <strain>K12 / W3110 / ATCC 27325 / DSM 5911</strain>
    </source>
</reference>
<reference key="4">
    <citation type="journal article" date="1991" name="FEBS Lett.">
        <title>Cysteinyl-tRNA synthetase is a direct descendant of the first aminoacyl-tRNA synthetase.</title>
        <authorList>
            <person name="Avalos J."/>
            <person name="Corrochano L.M."/>
            <person name="Brenner S."/>
        </authorList>
    </citation>
    <scope>NUCLEOTIDE SEQUENCE [GENOMIC DNA] OF 1-68</scope>
    <source>
        <strain>K12</strain>
    </source>
</reference>
<reference key="5">
    <citation type="journal article" date="1997" name="Electrophoresis">
        <title>Comparing the predicted and observed properties of proteins encoded in the genome of Escherichia coli K-12.</title>
        <authorList>
            <person name="Link A.J."/>
            <person name="Robison K."/>
            <person name="Church G.M."/>
        </authorList>
    </citation>
    <scope>PROTEIN SEQUENCE OF 1-12</scope>
    <source>
        <strain>K12 / EMG2</strain>
    </source>
</reference>
<reference key="6">
    <citation type="journal article" date="1998" name="J. Mol. Biol.">
        <title>Protein identification with N and C-terminal sequence tags in proteome projects.</title>
        <authorList>
            <person name="Wilkins M.R."/>
            <person name="Gasteiger E."/>
            <person name="Tonella L."/>
            <person name="Ou K."/>
            <person name="Tyler M."/>
            <person name="Sanchez J.-C."/>
            <person name="Gooley A.A."/>
            <person name="Walsh B.J."/>
            <person name="Bairoch A."/>
            <person name="Appel R.D."/>
            <person name="Williams K.L."/>
            <person name="Hochstrasser D.F."/>
        </authorList>
    </citation>
    <scope>PROTEIN SEQUENCE OF 1-4</scope>
    <source>
        <strain>K12 / W3110 / ATCC 27325 / DSM 5911</strain>
    </source>
</reference>
<reference key="7">
    <citation type="journal article" date="1992" name="Eur. J. Biochem.">
        <title>Structural and functional characterization of Escherichia coli peptidyl-prolyl cis-trans isomerases.</title>
        <authorList>
            <person name="Compton L.A."/>
            <person name="Davis J.M."/>
            <person name="Macdonald J.R."/>
            <person name="Baechinger H.P."/>
        </authorList>
    </citation>
    <scope>FUNCTION</scope>
    <scope>CATALYTIC ACTIVITY</scope>
    <scope>SUBCELLULAR LOCATION</scope>
    <scope>ACTIVITY REGULATION</scope>
</reference>
<reference key="8">
    <citation type="journal article" date="1996" name="J. Mol. Biol.">
        <title>The substrate-binding site in Escherichia coli cyclophilin A preferably recognizes a cis-proline isomer or a highly distorted form of the trans isomer.</title>
        <authorList>
            <person name="Konno M."/>
            <person name="Ito M."/>
            <person name="Hayano T."/>
            <person name="Takahashi N."/>
        </authorList>
    </citation>
    <scope>X-RAY CRYSTALLOGRAPHY (1.8 ANGSTROMS)</scope>
</reference>
<comment type="function">
    <text evidence="2 3">PPIases accelerate the folding of proteins. It catalyzes the cis-trans isomerization of proline imidic peptide bonds in oligopeptides.</text>
</comment>
<comment type="catalytic activity">
    <reaction evidence="2 3">
        <text>[protein]-peptidylproline (omega=180) = [protein]-peptidylproline (omega=0)</text>
        <dbReference type="Rhea" id="RHEA:16237"/>
        <dbReference type="Rhea" id="RHEA-COMP:10747"/>
        <dbReference type="Rhea" id="RHEA-COMP:10748"/>
        <dbReference type="ChEBI" id="CHEBI:83833"/>
        <dbReference type="ChEBI" id="CHEBI:83834"/>
        <dbReference type="EC" id="5.2.1.8"/>
    </reaction>
    <physiologicalReaction direction="left-to-right" evidence="2 3">
        <dbReference type="Rhea" id="RHEA:16238"/>
    </physiologicalReaction>
</comment>
<comment type="activity regulation">
    <text evidence="2">Inhibition by cyclosporin A with a Ki of 25 to 50 mu-mol, a concentration 1000-fold higher than that required for eukaryotic PPIases.</text>
</comment>
<comment type="interaction">
    <interactant intactId="EBI-555935">
        <id>P23869</id>
    </interactant>
    <interactant intactId="EBI-546818">
        <id>P16918</id>
        <label>rhsC</label>
    </interactant>
    <organismsDiffer>false</organismsDiffer>
    <experiments>6</experiments>
</comment>
<comment type="subcellular location">
    <subcellularLocation>
        <location evidence="2 3">Cytoplasm</location>
    </subcellularLocation>
</comment>
<comment type="similarity">
    <text evidence="4">Belongs to the cyclophilin-type PPIase family.</text>
</comment>
<organism>
    <name type="scientific">Escherichia coli (strain K12)</name>
    <dbReference type="NCBI Taxonomy" id="83333"/>
    <lineage>
        <taxon>Bacteria</taxon>
        <taxon>Pseudomonadati</taxon>
        <taxon>Pseudomonadota</taxon>
        <taxon>Gammaproteobacteria</taxon>
        <taxon>Enterobacterales</taxon>
        <taxon>Enterobacteriaceae</taxon>
        <taxon>Escherichia</taxon>
    </lineage>
</organism>
<gene>
    <name type="primary">ppiB</name>
    <name type="ordered locus">b0525</name>
    <name type="ordered locus">JW0514</name>
</gene>
<evidence type="ECO:0000255" key="1">
    <source>
        <dbReference type="PROSITE-ProRule" id="PRU00156"/>
    </source>
</evidence>
<evidence type="ECO:0000269" key="2">
    <source>
    </source>
</evidence>
<evidence type="ECO:0000269" key="3">
    <source>
    </source>
</evidence>
<evidence type="ECO:0000305" key="4"/>
<evidence type="ECO:0007829" key="5">
    <source>
        <dbReference type="PDB" id="2NUL"/>
    </source>
</evidence>
<evidence type="ECO:0007829" key="6">
    <source>
        <dbReference type="PDB" id="2RS4"/>
    </source>
</evidence>
<evidence type="ECO:0007829" key="7">
    <source>
        <dbReference type="PDB" id="8VRG"/>
    </source>
</evidence>
<evidence type="ECO:0007829" key="8">
    <source>
        <dbReference type="PDB" id="8VRI"/>
    </source>
</evidence>
<feature type="chain" id="PRO_0000064202" description="Peptidyl-prolyl cis-trans isomerase B">
    <location>
        <begin position="1"/>
        <end position="164"/>
    </location>
</feature>
<feature type="domain" description="PPIase cyclophilin-type" evidence="1">
    <location>
        <begin position="1"/>
        <end position="162"/>
    </location>
</feature>
<feature type="sequence conflict" description="In Ref. 1; AAA23453." evidence="4" ref="1">
    <original>V</original>
    <variation>E</variation>
    <location>
        <position position="132"/>
    </location>
</feature>
<feature type="strand" evidence="7">
    <location>
        <begin position="2"/>
        <end position="6"/>
    </location>
</feature>
<feature type="strand" evidence="7">
    <location>
        <begin position="9"/>
        <end position="15"/>
    </location>
</feature>
<feature type="turn" evidence="7">
    <location>
        <begin position="17"/>
        <end position="19"/>
    </location>
</feature>
<feature type="helix" evidence="7">
    <location>
        <begin position="21"/>
        <end position="32"/>
    </location>
</feature>
<feature type="turn" evidence="7">
    <location>
        <begin position="33"/>
        <end position="38"/>
    </location>
</feature>
<feature type="strand" evidence="7">
    <location>
        <begin position="39"/>
        <end position="45"/>
    </location>
</feature>
<feature type="turn" evidence="7">
    <location>
        <begin position="46"/>
        <end position="48"/>
    </location>
</feature>
<feature type="strand" evidence="7">
    <location>
        <begin position="49"/>
        <end position="56"/>
    </location>
</feature>
<feature type="turn" evidence="7">
    <location>
        <begin position="57"/>
        <end position="59"/>
    </location>
</feature>
<feature type="helix" evidence="8">
    <location>
        <begin position="72"/>
        <end position="74"/>
    </location>
</feature>
<feature type="strand" evidence="7">
    <location>
        <begin position="82"/>
        <end position="85"/>
    </location>
</feature>
<feature type="strand" evidence="6">
    <location>
        <begin position="88"/>
        <end position="90"/>
    </location>
</feature>
<feature type="strand" evidence="5">
    <location>
        <begin position="94"/>
        <end position="96"/>
    </location>
</feature>
<feature type="strand" evidence="7">
    <location>
        <begin position="98"/>
        <end position="103"/>
    </location>
</feature>
<feature type="helix" evidence="7">
    <location>
        <begin position="106"/>
        <end position="108"/>
    </location>
</feature>
<feature type="strand" evidence="7">
    <location>
        <begin position="112"/>
        <end position="114"/>
    </location>
</feature>
<feature type="turn" evidence="7">
    <location>
        <begin position="115"/>
        <end position="117"/>
    </location>
</feature>
<feature type="strand" evidence="7">
    <location>
        <begin position="122"/>
        <end position="128"/>
    </location>
</feature>
<feature type="helix" evidence="7">
    <location>
        <begin position="130"/>
        <end position="137"/>
    </location>
</feature>
<feature type="strand" evidence="7">
    <location>
        <begin position="141"/>
        <end position="144"/>
    </location>
</feature>
<feature type="strand" evidence="7">
    <location>
        <begin position="147"/>
        <end position="153"/>
    </location>
</feature>
<feature type="strand" evidence="7">
    <location>
        <begin position="156"/>
        <end position="162"/>
    </location>
</feature>
<dbReference type="EC" id="5.2.1.8" evidence="2 3"/>
<dbReference type="EMBL" id="M55430">
    <property type="protein sequence ID" value="AAA23453.1"/>
    <property type="molecule type" value="Genomic_DNA"/>
</dbReference>
<dbReference type="EMBL" id="U00096">
    <property type="protein sequence ID" value="AAC73627.1"/>
    <property type="molecule type" value="Genomic_DNA"/>
</dbReference>
<dbReference type="EMBL" id="AP009048">
    <property type="protein sequence ID" value="BAE76302.1"/>
    <property type="molecule type" value="Genomic_DNA"/>
</dbReference>
<dbReference type="EMBL" id="X59293">
    <property type="protein sequence ID" value="CAA41982.1"/>
    <property type="molecule type" value="Genomic_DNA"/>
</dbReference>
<dbReference type="PIR" id="D64784">
    <property type="entry name" value="CSECB"/>
</dbReference>
<dbReference type="RefSeq" id="NP_415058.1">
    <property type="nucleotide sequence ID" value="NC_000913.3"/>
</dbReference>
<dbReference type="RefSeq" id="WP_000255997.1">
    <property type="nucleotide sequence ID" value="NZ_STEB01000007.1"/>
</dbReference>
<dbReference type="PDB" id="1LOP">
    <property type="method" value="X-ray"/>
    <property type="resolution" value="1.80 A"/>
    <property type="chains" value="A=1-164"/>
</dbReference>
<dbReference type="PDB" id="2NUL">
    <property type="method" value="X-ray"/>
    <property type="resolution" value="2.10 A"/>
    <property type="chains" value="A=1-164"/>
</dbReference>
<dbReference type="PDB" id="2RS4">
    <property type="method" value="NMR"/>
    <property type="chains" value="A=1-164"/>
</dbReference>
<dbReference type="PDB" id="7N3J">
    <property type="method" value="X-ray"/>
    <property type="resolution" value="2.00 A"/>
    <property type="chains" value="A/B=1-164"/>
</dbReference>
<dbReference type="PDB" id="7Q6P">
    <property type="method" value="X-ray"/>
    <property type="resolution" value="1.82 A"/>
    <property type="chains" value="A/B/C/D=1-164"/>
</dbReference>
<dbReference type="PDB" id="7RFD">
    <property type="method" value="X-ray"/>
    <property type="resolution" value="1.35 A"/>
    <property type="chains" value="A=1-164"/>
</dbReference>
<dbReference type="PDB" id="8VRG">
    <property type="method" value="X-ray"/>
    <property type="resolution" value="1.22 A"/>
    <property type="chains" value="A=1-164"/>
</dbReference>
<dbReference type="PDB" id="8VRH">
    <property type="method" value="X-ray"/>
    <property type="resolution" value="1.80 A"/>
    <property type="chains" value="A/B/C/D=1-164"/>
</dbReference>
<dbReference type="PDB" id="8VRI">
    <property type="method" value="X-ray"/>
    <property type="resolution" value="1.65 A"/>
    <property type="chains" value="A/B/C/D/E=1-164"/>
</dbReference>
<dbReference type="PDB" id="9C5D">
    <property type="method" value="X-ray"/>
    <property type="resolution" value="1.30 A"/>
    <property type="chains" value="A/B/C/D=1-164"/>
</dbReference>
<dbReference type="PDBsum" id="1LOP"/>
<dbReference type="PDBsum" id="2NUL"/>
<dbReference type="PDBsum" id="2RS4"/>
<dbReference type="PDBsum" id="7N3J"/>
<dbReference type="PDBsum" id="7Q6P"/>
<dbReference type="PDBsum" id="7RFD"/>
<dbReference type="PDBsum" id="8VRG"/>
<dbReference type="PDBsum" id="8VRH"/>
<dbReference type="PDBsum" id="8VRI"/>
<dbReference type="PDBsum" id="9C5D"/>
<dbReference type="BMRB" id="P23869"/>
<dbReference type="SMR" id="P23869"/>
<dbReference type="BioGRID" id="4262014">
    <property type="interactions" value="61"/>
</dbReference>
<dbReference type="BioGRID" id="853282">
    <property type="interactions" value="1"/>
</dbReference>
<dbReference type="DIP" id="DIP-10546N"/>
<dbReference type="FunCoup" id="P23869">
    <property type="interactions" value="617"/>
</dbReference>
<dbReference type="IntAct" id="P23869">
    <property type="interactions" value="23"/>
</dbReference>
<dbReference type="STRING" id="511145.b0525"/>
<dbReference type="jPOST" id="P23869"/>
<dbReference type="PaxDb" id="511145-b0525"/>
<dbReference type="EnsemblBacteria" id="AAC73627">
    <property type="protein sequence ID" value="AAC73627"/>
    <property type="gene ID" value="b0525"/>
</dbReference>
<dbReference type="GeneID" id="949038"/>
<dbReference type="KEGG" id="ecj:JW0514"/>
<dbReference type="KEGG" id="eco:b0525"/>
<dbReference type="KEGG" id="ecoc:C3026_02575"/>
<dbReference type="PATRIC" id="fig|1411691.4.peg.1753"/>
<dbReference type="EchoBASE" id="EB0751"/>
<dbReference type="eggNOG" id="COG0652">
    <property type="taxonomic scope" value="Bacteria"/>
</dbReference>
<dbReference type="HOGENOM" id="CLU_012062_16_9_6"/>
<dbReference type="InParanoid" id="P23869"/>
<dbReference type="OMA" id="ELYNDHA"/>
<dbReference type="OrthoDB" id="9807797at2"/>
<dbReference type="PhylomeDB" id="P23869"/>
<dbReference type="BioCyc" id="EcoCyc:EG10758-MONOMER"/>
<dbReference type="BioCyc" id="MetaCyc:EG10758-MONOMER"/>
<dbReference type="EvolutionaryTrace" id="P23869"/>
<dbReference type="PRO" id="PR:P23869"/>
<dbReference type="Proteomes" id="UP000000625">
    <property type="component" value="Chromosome"/>
</dbReference>
<dbReference type="GO" id="GO:0005829">
    <property type="term" value="C:cytosol"/>
    <property type="evidence" value="ECO:0000314"/>
    <property type="project" value="EcoCyc"/>
</dbReference>
<dbReference type="GO" id="GO:0003755">
    <property type="term" value="F:peptidyl-prolyl cis-trans isomerase activity"/>
    <property type="evidence" value="ECO:0000314"/>
    <property type="project" value="EcoCyc"/>
</dbReference>
<dbReference type="GO" id="GO:0061077">
    <property type="term" value="P:chaperone-mediated protein folding"/>
    <property type="evidence" value="ECO:0000314"/>
    <property type="project" value="EcoCyc"/>
</dbReference>
<dbReference type="CDD" id="cd01920">
    <property type="entry name" value="cyclophilin_EcCYP_like"/>
    <property type="match status" value="1"/>
</dbReference>
<dbReference type="FunFam" id="2.40.100.10:FF:000004">
    <property type="entry name" value="Peptidyl-prolyl cis-trans isomerase"/>
    <property type="match status" value="1"/>
</dbReference>
<dbReference type="Gene3D" id="2.40.100.10">
    <property type="entry name" value="Cyclophilin-like"/>
    <property type="match status" value="1"/>
</dbReference>
<dbReference type="InterPro" id="IPR029000">
    <property type="entry name" value="Cyclophilin-like_dom_sf"/>
</dbReference>
<dbReference type="InterPro" id="IPR024936">
    <property type="entry name" value="Cyclophilin-type_PPIase"/>
</dbReference>
<dbReference type="InterPro" id="IPR020892">
    <property type="entry name" value="Cyclophilin-type_PPIase_CS"/>
</dbReference>
<dbReference type="InterPro" id="IPR002130">
    <property type="entry name" value="Cyclophilin-type_PPIase_dom"/>
</dbReference>
<dbReference type="InterPro" id="IPR044665">
    <property type="entry name" value="E_coli_cyclophilin_A-like"/>
</dbReference>
<dbReference type="NCBIfam" id="NF008057">
    <property type="entry name" value="PRK10791.1"/>
    <property type="match status" value="1"/>
</dbReference>
<dbReference type="PANTHER" id="PTHR43246">
    <property type="entry name" value="PEPTIDYL-PROLYL CIS-TRANS ISOMERASE CYP38, CHLOROPLASTIC"/>
    <property type="match status" value="1"/>
</dbReference>
<dbReference type="Pfam" id="PF00160">
    <property type="entry name" value="Pro_isomerase"/>
    <property type="match status" value="1"/>
</dbReference>
<dbReference type="PIRSF" id="PIRSF001467">
    <property type="entry name" value="Peptidylpro_ismrse"/>
    <property type="match status" value="1"/>
</dbReference>
<dbReference type="PRINTS" id="PR00153">
    <property type="entry name" value="CSAPPISMRASE"/>
</dbReference>
<dbReference type="SUPFAM" id="SSF50891">
    <property type="entry name" value="Cyclophilin-like"/>
    <property type="match status" value="1"/>
</dbReference>
<dbReference type="PROSITE" id="PS00170">
    <property type="entry name" value="CSA_PPIASE_1"/>
    <property type="match status" value="1"/>
</dbReference>
<dbReference type="PROSITE" id="PS50072">
    <property type="entry name" value="CSA_PPIASE_2"/>
    <property type="match status" value="1"/>
</dbReference>
<accession>P23869</accession>
<accession>P78052</accession>
<accession>Q2MBQ4</accession>
<protein>
    <recommendedName>
        <fullName>Peptidyl-prolyl cis-trans isomerase B</fullName>
        <shortName>PPIase B</shortName>
        <ecNumber evidence="2 3">5.2.1.8</ecNumber>
    </recommendedName>
    <alternativeName>
        <fullName>Rotamase B</fullName>
    </alternativeName>
</protein>
<proteinExistence type="evidence at protein level"/>
<sequence length="164" mass="18153">MVTFHTNHGDIVIKTFDDKAPETVKNFLDYCREGFYNNTIFHRVINGFMIQGGGFEPGMKQKATKEPIKNEANNGLKNTRGTLAMARTQAPHSATAQFFINVVDNDFLNFSGESLQGWGYCVFAEVVDGMDVVDKIKGVATGRSGMHQDVPKEDVIIESVTVSE</sequence>
<name>PPIB_ECOLI</name>
<keyword id="KW-0002">3D-structure</keyword>
<keyword id="KW-0963">Cytoplasm</keyword>
<keyword id="KW-0903">Direct protein sequencing</keyword>
<keyword id="KW-0413">Isomerase</keyword>
<keyword id="KW-1185">Reference proteome</keyword>
<keyword id="KW-0697">Rotamase</keyword>